<dbReference type="EMBL" id="CP000153">
    <property type="protein sequence ID" value="ABB45341.1"/>
    <property type="molecule type" value="Genomic_DNA"/>
</dbReference>
<dbReference type="RefSeq" id="WP_011373681.1">
    <property type="nucleotide sequence ID" value="NC_007575.1"/>
</dbReference>
<dbReference type="SMR" id="Q30NU0"/>
<dbReference type="STRING" id="326298.Suden_2067"/>
<dbReference type="KEGG" id="tdn:Suden_2067"/>
<dbReference type="eggNOG" id="COG0233">
    <property type="taxonomic scope" value="Bacteria"/>
</dbReference>
<dbReference type="HOGENOM" id="CLU_073981_2_1_7"/>
<dbReference type="OrthoDB" id="9804006at2"/>
<dbReference type="Proteomes" id="UP000002714">
    <property type="component" value="Chromosome"/>
</dbReference>
<dbReference type="GO" id="GO:0005829">
    <property type="term" value="C:cytosol"/>
    <property type="evidence" value="ECO:0007669"/>
    <property type="project" value="GOC"/>
</dbReference>
<dbReference type="GO" id="GO:0043023">
    <property type="term" value="F:ribosomal large subunit binding"/>
    <property type="evidence" value="ECO:0007669"/>
    <property type="project" value="TreeGrafter"/>
</dbReference>
<dbReference type="GO" id="GO:0002184">
    <property type="term" value="P:cytoplasmic translational termination"/>
    <property type="evidence" value="ECO:0007669"/>
    <property type="project" value="TreeGrafter"/>
</dbReference>
<dbReference type="CDD" id="cd00520">
    <property type="entry name" value="RRF"/>
    <property type="match status" value="1"/>
</dbReference>
<dbReference type="FunFam" id="1.10.132.20:FF:000001">
    <property type="entry name" value="Ribosome-recycling factor"/>
    <property type="match status" value="1"/>
</dbReference>
<dbReference type="FunFam" id="3.30.1360.40:FF:000001">
    <property type="entry name" value="Ribosome-recycling factor"/>
    <property type="match status" value="1"/>
</dbReference>
<dbReference type="Gene3D" id="3.30.1360.40">
    <property type="match status" value="1"/>
</dbReference>
<dbReference type="Gene3D" id="1.10.132.20">
    <property type="entry name" value="Ribosome-recycling factor"/>
    <property type="match status" value="1"/>
</dbReference>
<dbReference type="HAMAP" id="MF_00040">
    <property type="entry name" value="RRF"/>
    <property type="match status" value="1"/>
</dbReference>
<dbReference type="InterPro" id="IPR002661">
    <property type="entry name" value="Ribosome_recyc_fac"/>
</dbReference>
<dbReference type="InterPro" id="IPR023584">
    <property type="entry name" value="Ribosome_recyc_fac_dom"/>
</dbReference>
<dbReference type="InterPro" id="IPR036191">
    <property type="entry name" value="RRF_sf"/>
</dbReference>
<dbReference type="NCBIfam" id="TIGR00496">
    <property type="entry name" value="frr"/>
    <property type="match status" value="1"/>
</dbReference>
<dbReference type="PANTHER" id="PTHR20982:SF3">
    <property type="entry name" value="MITOCHONDRIAL RIBOSOME RECYCLING FACTOR PSEUDO 1"/>
    <property type="match status" value="1"/>
</dbReference>
<dbReference type="PANTHER" id="PTHR20982">
    <property type="entry name" value="RIBOSOME RECYCLING FACTOR"/>
    <property type="match status" value="1"/>
</dbReference>
<dbReference type="Pfam" id="PF01765">
    <property type="entry name" value="RRF"/>
    <property type="match status" value="1"/>
</dbReference>
<dbReference type="SUPFAM" id="SSF55194">
    <property type="entry name" value="Ribosome recycling factor, RRF"/>
    <property type="match status" value="1"/>
</dbReference>
<comment type="function">
    <text evidence="1">Responsible for the release of ribosomes from messenger RNA at the termination of protein biosynthesis. May increase the efficiency of translation by recycling ribosomes from one round of translation to another.</text>
</comment>
<comment type="subcellular location">
    <subcellularLocation>
        <location evidence="1">Cytoplasm</location>
    </subcellularLocation>
</comment>
<comment type="similarity">
    <text evidence="1">Belongs to the RRF family.</text>
</comment>
<sequence>MLNELFNECETKMKSSVNHMLRDFKTLRTGKVTTSVLDNVKIDYYGTLTALDQVGSILVADATTIIINPWEKNLLNIIDSAISKANIGATPNNDGSQIKLFFPAMTVEQRQESVKQMKGMGEHAKVAVRNDRKNANDKIKKSEKDKEITADESKSAQDNIQKITDKYISEIDSILKTKEAEILKV</sequence>
<feature type="chain" id="PRO_1000071066" description="Ribosome-recycling factor">
    <location>
        <begin position="1"/>
        <end position="185"/>
    </location>
</feature>
<feature type="region of interest" description="Disordered" evidence="2">
    <location>
        <begin position="131"/>
        <end position="156"/>
    </location>
</feature>
<feature type="compositionally biased region" description="Basic and acidic residues" evidence="2">
    <location>
        <begin position="131"/>
        <end position="155"/>
    </location>
</feature>
<accession>Q30NU0</accession>
<proteinExistence type="inferred from homology"/>
<keyword id="KW-0963">Cytoplasm</keyword>
<keyword id="KW-0648">Protein biosynthesis</keyword>
<keyword id="KW-1185">Reference proteome</keyword>
<organism>
    <name type="scientific">Sulfurimonas denitrificans (strain ATCC 33889 / DSM 1251)</name>
    <name type="common">Thiomicrospira denitrificans (strain ATCC 33889 / DSM 1251)</name>
    <dbReference type="NCBI Taxonomy" id="326298"/>
    <lineage>
        <taxon>Bacteria</taxon>
        <taxon>Pseudomonadati</taxon>
        <taxon>Campylobacterota</taxon>
        <taxon>Epsilonproteobacteria</taxon>
        <taxon>Campylobacterales</taxon>
        <taxon>Sulfurimonadaceae</taxon>
        <taxon>Sulfurimonas</taxon>
    </lineage>
</organism>
<evidence type="ECO:0000255" key="1">
    <source>
        <dbReference type="HAMAP-Rule" id="MF_00040"/>
    </source>
</evidence>
<evidence type="ECO:0000256" key="2">
    <source>
        <dbReference type="SAM" id="MobiDB-lite"/>
    </source>
</evidence>
<gene>
    <name evidence="1" type="primary">frr</name>
    <name type="ordered locus">Suden_2067</name>
</gene>
<reference key="1">
    <citation type="journal article" date="2008" name="Appl. Environ. Microbiol.">
        <title>Genome of the epsilonproteobacterial chemolithoautotroph Sulfurimonas denitrificans.</title>
        <authorList>
            <person name="Sievert S.M."/>
            <person name="Scott K.M."/>
            <person name="Klotz M.G."/>
            <person name="Chain P.S.G."/>
            <person name="Hauser L.J."/>
            <person name="Hemp J."/>
            <person name="Huegler M."/>
            <person name="Land M."/>
            <person name="Lapidus A."/>
            <person name="Larimer F.W."/>
            <person name="Lucas S."/>
            <person name="Malfatti S.A."/>
            <person name="Meyer F."/>
            <person name="Paulsen I.T."/>
            <person name="Ren Q."/>
            <person name="Simon J."/>
            <person name="Bailey K."/>
            <person name="Diaz E."/>
            <person name="Fitzpatrick K.A."/>
            <person name="Glover B."/>
            <person name="Gwatney N."/>
            <person name="Korajkic A."/>
            <person name="Long A."/>
            <person name="Mobberley J.M."/>
            <person name="Pantry S.N."/>
            <person name="Pazder G."/>
            <person name="Peterson S."/>
            <person name="Quintanilla J.D."/>
            <person name="Sprinkle R."/>
            <person name="Stephens J."/>
            <person name="Thomas P."/>
            <person name="Vaughn R."/>
            <person name="Weber M.J."/>
            <person name="Wooten L.L."/>
        </authorList>
    </citation>
    <scope>NUCLEOTIDE SEQUENCE [LARGE SCALE GENOMIC DNA]</scope>
    <source>
        <strain>ATCC 33889 / DSM 1251</strain>
    </source>
</reference>
<name>RRF_SULDN</name>
<protein>
    <recommendedName>
        <fullName evidence="1">Ribosome-recycling factor</fullName>
        <shortName evidence="1">RRF</shortName>
    </recommendedName>
    <alternativeName>
        <fullName evidence="1">Ribosome-releasing factor</fullName>
    </alternativeName>
</protein>